<name>TACT2_SALT1</name>
<gene>
    <name evidence="8" type="primary">tacT2</name>
    <name evidence="7" type="synonym">t9</name>
    <name evidence="11" type="ordered locus">STM14_5192</name>
</gene>
<keyword id="KW-0002">3D-structure</keyword>
<keyword id="KW-0012">Acyltransferase</keyword>
<keyword id="KW-0678">Repressor</keyword>
<keyword id="KW-0694">RNA-binding</keyword>
<keyword id="KW-1277">Toxin-antitoxin system</keyword>
<keyword id="KW-0804">Transcription</keyword>
<keyword id="KW-0805">Transcription regulation</keyword>
<keyword id="KW-0808">Transferase</keyword>
<keyword id="KW-0820">tRNA-binding</keyword>
<evidence type="ECO:0000250" key="1">
    <source>
        <dbReference type="UniProtKB" id="A0A0F6B5X4"/>
    </source>
</evidence>
<evidence type="ECO:0000250" key="2">
    <source>
        <dbReference type="UniProtKB" id="A0A0F6B8D8"/>
    </source>
</evidence>
<evidence type="ECO:0000269" key="3">
    <source>
    </source>
</evidence>
<evidence type="ECO:0000269" key="4">
    <source>
    </source>
</evidence>
<evidence type="ECO:0000269" key="5">
    <source>
    </source>
</evidence>
<evidence type="ECO:0000269" key="6">
    <source>
    </source>
</evidence>
<evidence type="ECO:0000303" key="7">
    <source>
    </source>
</evidence>
<evidence type="ECO:0000303" key="8">
    <source>
    </source>
</evidence>
<evidence type="ECO:0000305" key="9"/>
<evidence type="ECO:0000305" key="10">
    <source>
    </source>
</evidence>
<evidence type="ECO:0000312" key="11">
    <source>
        <dbReference type="EMBL" id="ACY91531.1"/>
    </source>
</evidence>
<evidence type="ECO:0007744" key="12">
    <source>
        <dbReference type="PDB" id="7AK7"/>
    </source>
</evidence>
<evidence type="ECO:0007829" key="13">
    <source>
        <dbReference type="PDB" id="7AK7"/>
    </source>
</evidence>
<feature type="chain" id="PRO_0000461703" description="tRNA-acetylating toxin 2">
    <location>
        <begin position="1"/>
        <end position="163"/>
    </location>
</feature>
<feature type="active site" evidence="9">
    <location>
        <position position="137"/>
    </location>
</feature>
<feature type="binding site" evidence="12">
    <location>
        <position position="89"/>
    </location>
    <ligand>
        <name>acetyl-CoA</name>
        <dbReference type="ChEBI" id="CHEBI:57288"/>
    </ligand>
</feature>
<feature type="binding site" evidence="5 12">
    <location>
        <position position="91"/>
    </location>
    <ligand>
        <name>acetyl-CoA</name>
        <dbReference type="ChEBI" id="CHEBI:57288"/>
    </ligand>
</feature>
<feature type="binding site" evidence="12">
    <location>
        <position position="96"/>
    </location>
    <ligand>
        <name>acetyl-CoA</name>
        <dbReference type="ChEBI" id="CHEBI:57288"/>
    </ligand>
</feature>
<feature type="binding site" evidence="5 12">
    <location>
        <position position="97"/>
    </location>
    <ligand>
        <name>acetyl-CoA</name>
        <dbReference type="ChEBI" id="CHEBI:57288"/>
    </ligand>
</feature>
<feature type="binding site" evidence="5 12">
    <location>
        <position position="98"/>
    </location>
    <ligand>
        <name>acetyl-CoA</name>
        <dbReference type="ChEBI" id="CHEBI:57288"/>
    </ligand>
</feature>
<feature type="binding site" evidence="5 12">
    <location>
        <position position="99"/>
    </location>
    <ligand>
        <name>acetyl-CoA</name>
        <dbReference type="ChEBI" id="CHEBI:57288"/>
    </ligand>
</feature>
<feature type="binding site" evidence="5 12">
    <location>
        <position position="101"/>
    </location>
    <ligand>
        <name>acetyl-CoA</name>
        <dbReference type="ChEBI" id="CHEBI:57288"/>
    </ligand>
</feature>
<feature type="binding site" evidence="5 12">
    <location>
        <position position="102"/>
    </location>
    <ligand>
        <name>acetyl-CoA</name>
        <dbReference type="ChEBI" id="CHEBI:57288"/>
    </ligand>
</feature>
<feature type="binding site" evidence="12">
    <location>
        <position position="132"/>
    </location>
    <ligand>
        <name>acetyl-CoA</name>
        <dbReference type="ChEBI" id="CHEBI:57288"/>
    </ligand>
</feature>
<feature type="binding site" evidence="12">
    <location>
        <position position="139"/>
    </location>
    <ligand>
        <name>acetyl-CoA</name>
        <dbReference type="ChEBI" id="CHEBI:57288"/>
    </ligand>
</feature>
<feature type="sequence variant" description="In strain: S.enterica NCTC 13349.">
    <original>E</original>
    <variation>K</variation>
    <location>
        <position position="29"/>
    </location>
</feature>
<feature type="helix" evidence="13">
    <location>
        <begin position="22"/>
        <end position="30"/>
    </location>
</feature>
<feature type="helix" evidence="13">
    <location>
        <begin position="32"/>
        <end position="38"/>
    </location>
</feature>
<feature type="strand" evidence="13">
    <location>
        <begin position="42"/>
        <end position="47"/>
    </location>
</feature>
<feature type="strand" evidence="13">
    <location>
        <begin position="51"/>
        <end position="66"/>
    </location>
</feature>
<feature type="strand" evidence="13">
    <location>
        <begin position="81"/>
        <end position="91"/>
    </location>
</feature>
<feature type="helix" evidence="13">
    <location>
        <begin position="93"/>
        <end position="95"/>
    </location>
</feature>
<feature type="helix" evidence="13">
    <location>
        <begin position="100"/>
        <end position="119"/>
    </location>
</feature>
<feature type="strand" evidence="13">
    <location>
        <begin position="123"/>
        <end position="127"/>
    </location>
</feature>
<feature type="helix" evidence="13">
    <location>
        <begin position="131"/>
        <end position="139"/>
    </location>
</feature>
<feature type="strand" evidence="13">
    <location>
        <begin position="151"/>
        <end position="155"/>
    </location>
</feature>
<feature type="helix" evidence="13">
    <location>
        <begin position="156"/>
        <end position="162"/>
    </location>
</feature>
<reference evidence="11" key="1">
    <citation type="journal article" date="2010" name="J. Bacteriol.">
        <title>Short-term signatures of evolutionary change in the Salmonella enterica serovar typhimurium 14028 genome.</title>
        <authorList>
            <person name="Jarvik T."/>
            <person name="Smillie C."/>
            <person name="Groisman E.A."/>
            <person name="Ochman H."/>
        </authorList>
    </citation>
    <scope>NUCLEOTIDE SEQUENCE [LARGE SCALE GENOMIC DNA]</scope>
    <source>
        <strain>14028s / SGSC 2262</strain>
    </source>
</reference>
<reference key="2">
    <citation type="journal article" date="2014" name="Science">
        <title>Internalization of Salmonella by macrophages induces formation of nonreplicating persisters.</title>
        <authorList>
            <person name="Helaine S."/>
            <person name="Cheverton A.M."/>
            <person name="Watson K.G."/>
            <person name="Faure L.M."/>
            <person name="Matthews S.A."/>
            <person name="Holden D.W."/>
        </authorList>
    </citation>
    <scope>OPERON FUNCTION IN PERSISTER CELL FORMATION</scope>
    <scope>INDUCTION IN HOST MACROPHAGES</scope>
    <scope>DISRUPTION PHENOTYPE</scope>
    <source>
        <strain>14028s / SGSC 2262</strain>
    </source>
</reference>
<reference key="3">
    <citation type="journal article" date="2018" name="Nat. Commun.">
        <title>Activity of acetyltransferase toxins involved in Salmonella persister formation during macrophage infection.</title>
        <authorList>
            <person name="Rycroft J.A."/>
            <person name="Gollan B."/>
            <person name="Grabe G.J."/>
            <person name="Hall A."/>
            <person name="Cheverton A.M."/>
            <person name="Larrouy-Maumus G."/>
            <person name="Hare S.A."/>
            <person name="Helaine S."/>
        </authorList>
    </citation>
    <scope>FUNCTION AS A TOXIN</scope>
    <scope>CATALYTIC ACTIVITY</scope>
    <scope>BIOPHYSICOCHEMICAL PROPERTIES</scope>
    <scope>DISRUPTION PHENOTYPE</scope>
    <source>
        <strain>14028s / SGSC 2262</strain>
    </source>
</reference>
<reference key="4">
    <citation type="journal article" date="2022" name="Nucleic Acids Res.">
        <title>GNAT toxins evolve toward narrow tRNA target specificities.</title>
        <authorList>
            <person name="Bikmetov D."/>
            <person name="Hall A.M.J."/>
            <person name="Livenskyi A."/>
            <person name="Gollan B."/>
            <person name="Ovchinnikov S."/>
            <person name="Gilep K."/>
            <person name="Kim J.Y."/>
            <person name="Larrouy-Maumus G."/>
            <person name="Zgoda V."/>
            <person name="Borukhov S."/>
            <person name="Severinov K."/>
            <person name="Helaine S."/>
            <person name="Dubiley S."/>
        </authorList>
    </citation>
    <scope>FUNCTION</scope>
    <scope>CATALYTIC ACTIVITY</scope>
    <scope>SUBSTRATE SPECIFICITY</scope>
    <source>
        <strain>ATCC 14028 / SGSC 2980 / CDC 6516-60 / NCTC 12023</strain>
    </source>
</reference>
<reference evidence="12" key="5">
    <citation type="journal article" date="2021" name="Nat. Chem. Biol.">
        <title>Auxiliary interfaces support the evolution of specific toxin-antitoxin pairing.</title>
        <authorList>
            <person name="Grabe G.J."/>
            <person name="Giorgio R.T."/>
            <person name="Hall A.M.J."/>
            <person name="Morgan R.M.L."/>
            <person name="Dubois L."/>
            <person name="Sisley T.A."/>
            <person name="Rycroft J.A."/>
            <person name="Hare S.A."/>
            <person name="Helaine S."/>
        </authorList>
    </citation>
    <scope>X-RAY CRYSTALLOGRAPHY (2.14 ANGSTROMS) IN COMPLEX WITH ANTITOXIN AND ACETYL-COA</scope>
    <scope>FUNCTION AS A TOXIN</scope>
    <scope>SUBUNIT</scope>
    <source>
        <strain>14028s / SGSC 2262</strain>
    </source>
</reference>
<organism>
    <name type="scientific">Salmonella typhimurium (strain 14028s / SGSC 2262)</name>
    <dbReference type="NCBI Taxonomy" id="588858"/>
    <lineage>
        <taxon>Bacteria</taxon>
        <taxon>Pseudomonadati</taxon>
        <taxon>Pseudomonadota</taxon>
        <taxon>Gammaproteobacteria</taxon>
        <taxon>Enterobacterales</taxon>
        <taxon>Enterobacteriaceae</taxon>
        <taxon>Salmonella</taxon>
    </lineage>
</organism>
<dbReference type="EC" id="2.3.1.-" evidence="10"/>
<dbReference type="EMBL" id="CP001363">
    <property type="protein sequence ID" value="ACY91531.1"/>
    <property type="molecule type" value="Genomic_DNA"/>
</dbReference>
<dbReference type="RefSeq" id="WP_000626099.1">
    <property type="nucleotide sequence ID" value="NZ_CP043402.1"/>
</dbReference>
<dbReference type="PDB" id="7AK7">
    <property type="method" value="X-ray"/>
    <property type="resolution" value="2.14 A"/>
    <property type="chains" value="A/B=1-163"/>
</dbReference>
<dbReference type="PDBsum" id="7AK7"/>
<dbReference type="SMR" id="A0A0F6BAH9"/>
<dbReference type="KEGG" id="seo:STM14_5192"/>
<dbReference type="PATRIC" id="fig|588858.6.peg.4697"/>
<dbReference type="HOGENOM" id="CLU_101288_0_0_6"/>
<dbReference type="BioCyc" id="SENT588858:STM14_RS22660-MONOMER"/>
<dbReference type="Proteomes" id="UP000002695">
    <property type="component" value="Chromosome"/>
</dbReference>
<dbReference type="GO" id="GO:0016747">
    <property type="term" value="F:acyltransferase activity, transferring groups other than amino-acyl groups"/>
    <property type="evidence" value="ECO:0007669"/>
    <property type="project" value="InterPro"/>
</dbReference>
<dbReference type="GO" id="GO:0000049">
    <property type="term" value="F:tRNA binding"/>
    <property type="evidence" value="ECO:0007669"/>
    <property type="project" value="UniProtKB-KW"/>
</dbReference>
<dbReference type="CDD" id="cd04301">
    <property type="entry name" value="NAT_SF"/>
    <property type="match status" value="1"/>
</dbReference>
<dbReference type="Gene3D" id="3.40.630.30">
    <property type="match status" value="1"/>
</dbReference>
<dbReference type="InterPro" id="IPR016181">
    <property type="entry name" value="Acyl_CoA_acyltransferase"/>
</dbReference>
<dbReference type="InterPro" id="IPR000182">
    <property type="entry name" value="GNAT_dom"/>
</dbReference>
<dbReference type="PANTHER" id="PTHR36449:SF1">
    <property type="entry name" value="ACETYLTRANSFERASE"/>
    <property type="match status" value="1"/>
</dbReference>
<dbReference type="PANTHER" id="PTHR36449">
    <property type="entry name" value="ACETYLTRANSFERASE-RELATED"/>
    <property type="match status" value="1"/>
</dbReference>
<dbReference type="Pfam" id="PF13508">
    <property type="entry name" value="Acetyltransf_7"/>
    <property type="match status" value="1"/>
</dbReference>
<dbReference type="SUPFAM" id="SSF55729">
    <property type="entry name" value="Acyl-CoA N-acyltransferases (Nat)"/>
    <property type="match status" value="1"/>
</dbReference>
<sequence>MISTPEPLHAGHILTPFCCGVDSIDNWLEQRAMKNQTTGASRTFVCCGSDSNVLAYYSLASSAVTTNTSPGRFRRNMPDPIPVVVLGRLAVDKSLHGQGVARALVRDAGLRVIQVAETIGIRGMLVHALSDEAREFYQRVGFVPSPMDPMMLMVTLGDLVESV</sequence>
<accession>A0A0F6BAH9</accession>
<protein>
    <recommendedName>
        <fullName evidence="9">tRNA-acetylating toxin 2</fullName>
        <shortName evidence="8">TacT2</shortName>
        <ecNumber evidence="10">2.3.1.-</ecNumber>
    </recommendedName>
    <alternativeName>
        <fullName evidence="7">Toxin T9</fullName>
    </alternativeName>
</protein>
<comment type="function">
    <text evidence="4 5 6">Toxic component of a type II toxin-antitoxin (TA) system (PubMed:29777131, PubMed:34556858). Acetylates tRNA and inhibits translation. Acetylates exclusively Gly in situ (PubMed:29777131, PubMed:35609997). Overexpression during the lag phase of a tacA2-tacT2 deletion strain leads to very small increase in persister cells in the presence of cefotaxime but no detectable growth phenotype in absence of antibiotics (PubMed:29777131). Compared to a protein with a single amino acid change (TacT2 from S.enterica NCTC 13349, Glu-29 is Lys in NCTC 13349) this protein binds tRNA very poorly and acetylates tRNA very poorly (PubMed:29777131). Persister cell formation is neutralized by cognate antitoxin TacA2 (PubMed:29777131). Neutralized only by cognate antitoxin TacA2 (A8), but not by TacA1 or TacA3 (PubMed:34556858). Plays a role in persister cell formation (PubMed:24408438).</text>
</comment>
<comment type="function">
    <text evidence="1">The TacA2-TacT2 complex both represses and derepresses expression of its own operon.</text>
</comment>
<comment type="catalytic activity">
    <reaction evidence="4">
        <text>glycyl-tRNA(Gly) + acetyl-CoA = N-acetylglycyl-tRNA(Gly) + CoA + H(+)</text>
        <dbReference type="Rhea" id="RHEA:81867"/>
        <dbReference type="Rhea" id="RHEA-COMP:9683"/>
        <dbReference type="Rhea" id="RHEA-COMP:19766"/>
        <dbReference type="ChEBI" id="CHEBI:15378"/>
        <dbReference type="ChEBI" id="CHEBI:57287"/>
        <dbReference type="ChEBI" id="CHEBI:57288"/>
        <dbReference type="ChEBI" id="CHEBI:78522"/>
        <dbReference type="ChEBI" id="CHEBI:232036"/>
    </reaction>
</comment>
<comment type="biophysicochemical properties">
    <phDependence>
        <text evidence="4">Optimum pH is 7.5, has much less activity at pH 6.0-7.0.</text>
    </phDependence>
</comment>
<comment type="subunit">
    <text evidence="2 4 5">Homodimer (in absence of antitoxin) (By similarity). Forms a complex with cognate antitoxin TacA2 (PubMed:29777131). Forms a 4:2 antitoxin:toxin complex with cognate antitoxin TacA2 (PubMed:29777131, PubMed:34556858).</text>
</comment>
<comment type="induction">
    <text evidence="3">The tacA2-tacT2 operon is up-regulated about 15-fold in a relA-spoT-dependent manner within 30 minutes of phagocytosis by mouse bone marrow-derived macrophages.</text>
</comment>
<comment type="disruption phenotype">
    <text evidence="3 4">Deleting the operon causes 90% reduction in persister cell formation in mouse bone marrow-derived macrophages (PubMed:24408438). All 3 tacA-tacT operons can be deleted without an effect on growth in cell culture (PubMed:29777131).</text>
</comment>
<comment type="similarity">
    <text evidence="9">Belongs to the acetyltransferase family. GNAT subfamily.</text>
</comment>
<proteinExistence type="evidence at protein level"/>